<sequence>MKRVLTALAATLPFAANAADAISGAVERQPTNWQAIIMFLIFVVFTLGITYWASKRVRSRSDYYTAGGNITGFQNGLAIAGDYMSAASFLGISALVFTSGYDGLIYSLGFLVGWPIILFLIAERLRNLGRYTFADVASYRLKQGPIRILSACGSLVVVALYLIAQMVGAGKLIELLFGLNYHIAVVLVGVLMMMYVLFGGMLATTWVQIIKAVLLLFGASFMAFMVMKHVGFSFNNLFSEAMAVHPKGVDIMKPGGLVKDPISALSLGLGLMFGTAGLPHILMRFFTVSDAREARKSVFYATGFMGYFYILTFIIGFGAIMLVGANPEYKDAAGHLIGGNNMAAVHLANAVGGNLFLGFISAVAFATILAVVAGLTLAGASAVSHDLYANVFKKGATEREELRVSKITVLILGVIAIILGVLFENQNIAFMVGLAFAIAASCNFPIILLSMYWSKLTTRGAMMGGWLGLITAVVLMILGPTIWVQILGHEKAIFPYEYPALFSITVAFLGIWFFSATDNSAEGARERELFRAQFIRSQTGFGVEQGRAH</sequence>
<proteinExistence type="inferred from homology"/>
<comment type="function">
    <text evidence="1">Transports acetate.</text>
</comment>
<comment type="subcellular location">
    <subcellularLocation>
        <location evidence="1">Cell inner membrane</location>
        <topology evidence="1">Multi-pass membrane protein</topology>
    </subcellularLocation>
</comment>
<comment type="similarity">
    <text evidence="1">Belongs to the sodium:solute symporter (SSF) (TC 2.A.21) family.</text>
</comment>
<dbReference type="EMBL" id="CP000948">
    <property type="protein sequence ID" value="ACB05064.1"/>
    <property type="molecule type" value="Genomic_DNA"/>
</dbReference>
<dbReference type="RefSeq" id="WP_000832573.1">
    <property type="nucleotide sequence ID" value="NC_010473.1"/>
</dbReference>
<dbReference type="SMR" id="B1XCV3"/>
<dbReference type="KEGG" id="ecd:ECDH10B_4257"/>
<dbReference type="HOGENOM" id="CLU_018808_8_3_6"/>
<dbReference type="GO" id="GO:0005886">
    <property type="term" value="C:plasma membrane"/>
    <property type="evidence" value="ECO:0007669"/>
    <property type="project" value="UniProtKB-SubCell"/>
</dbReference>
<dbReference type="GO" id="GO:0015123">
    <property type="term" value="F:acetate transmembrane transporter activity"/>
    <property type="evidence" value="ECO:0007669"/>
    <property type="project" value="UniProtKB-UniRule"/>
</dbReference>
<dbReference type="GO" id="GO:0043879">
    <property type="term" value="F:glycolate transmembrane transporter activity"/>
    <property type="evidence" value="ECO:0007669"/>
    <property type="project" value="InterPro"/>
</dbReference>
<dbReference type="GO" id="GO:0015293">
    <property type="term" value="F:symporter activity"/>
    <property type="evidence" value="ECO:0007669"/>
    <property type="project" value="UniProtKB-KW"/>
</dbReference>
<dbReference type="GO" id="GO:0006847">
    <property type="term" value="P:plasma membrane acetate transport"/>
    <property type="evidence" value="ECO:0007669"/>
    <property type="project" value="TreeGrafter"/>
</dbReference>
<dbReference type="GO" id="GO:0006814">
    <property type="term" value="P:sodium ion transport"/>
    <property type="evidence" value="ECO:0007669"/>
    <property type="project" value="UniProtKB-KW"/>
</dbReference>
<dbReference type="CDD" id="cd11480">
    <property type="entry name" value="SLC5sbd_u4"/>
    <property type="match status" value="1"/>
</dbReference>
<dbReference type="FunFam" id="1.20.1730.10:FF:000001">
    <property type="entry name" value="Cation/acetate symporter ActP"/>
    <property type="match status" value="1"/>
</dbReference>
<dbReference type="Gene3D" id="1.20.1730.10">
    <property type="entry name" value="Sodium/glucose cotransporter"/>
    <property type="match status" value="1"/>
</dbReference>
<dbReference type="HAMAP" id="MF_01426">
    <property type="entry name" value="Acet_symport_ActP"/>
    <property type="match status" value="1"/>
</dbReference>
<dbReference type="InterPro" id="IPR014083">
    <property type="entry name" value="Cation/Ac_symporter_ActP"/>
</dbReference>
<dbReference type="InterPro" id="IPR038377">
    <property type="entry name" value="Na/Glc_symporter_sf"/>
</dbReference>
<dbReference type="InterPro" id="IPR001734">
    <property type="entry name" value="Na/solute_symporter"/>
</dbReference>
<dbReference type="InterPro" id="IPR018212">
    <property type="entry name" value="Na/solute_symporter_CS"/>
</dbReference>
<dbReference type="InterPro" id="IPR050277">
    <property type="entry name" value="Sodium:Solute_Symporter"/>
</dbReference>
<dbReference type="NCBIfam" id="NF006903">
    <property type="entry name" value="PRK09395.1"/>
    <property type="match status" value="1"/>
</dbReference>
<dbReference type="NCBIfam" id="NF009135">
    <property type="entry name" value="PRK12488.1"/>
    <property type="match status" value="1"/>
</dbReference>
<dbReference type="NCBIfam" id="TIGR00813">
    <property type="entry name" value="sss"/>
    <property type="match status" value="1"/>
</dbReference>
<dbReference type="NCBIfam" id="TIGR02711">
    <property type="entry name" value="symport_actP"/>
    <property type="match status" value="1"/>
</dbReference>
<dbReference type="PANTHER" id="PTHR48086:SF6">
    <property type="entry name" value="CATION_ACETATE SYMPORTER ACTP"/>
    <property type="match status" value="1"/>
</dbReference>
<dbReference type="PANTHER" id="PTHR48086">
    <property type="entry name" value="SODIUM/PROLINE SYMPORTER-RELATED"/>
    <property type="match status" value="1"/>
</dbReference>
<dbReference type="Pfam" id="PF00474">
    <property type="entry name" value="SSF"/>
    <property type="match status" value="1"/>
</dbReference>
<dbReference type="PROSITE" id="PS00456">
    <property type="entry name" value="NA_SOLUT_SYMP_1"/>
    <property type="match status" value="1"/>
</dbReference>
<dbReference type="PROSITE" id="PS00457">
    <property type="entry name" value="NA_SOLUT_SYMP_2"/>
    <property type="match status" value="1"/>
</dbReference>
<dbReference type="PROSITE" id="PS50283">
    <property type="entry name" value="NA_SOLUT_SYMP_3"/>
    <property type="match status" value="1"/>
</dbReference>
<protein>
    <recommendedName>
        <fullName evidence="1">Cation/acetate symporter ActP</fullName>
    </recommendedName>
    <alternativeName>
        <fullName evidence="1">Acetate permease</fullName>
    </alternativeName>
    <alternativeName>
        <fullName evidence="1">Acetate transporter ActP</fullName>
    </alternativeName>
</protein>
<feature type="chain" id="PRO_1000145715" description="Cation/acetate symporter ActP">
    <location>
        <begin position="1"/>
        <end position="549"/>
    </location>
</feature>
<feature type="transmembrane region" description="Helical" evidence="1">
    <location>
        <begin position="33"/>
        <end position="53"/>
    </location>
</feature>
<feature type="transmembrane region" description="Helical" evidence="1">
    <location>
        <begin position="77"/>
        <end position="97"/>
    </location>
</feature>
<feature type="transmembrane region" description="Helical" evidence="1">
    <location>
        <begin position="103"/>
        <end position="123"/>
    </location>
</feature>
<feature type="transmembrane region" description="Helical" evidence="1">
    <location>
        <begin position="148"/>
        <end position="168"/>
    </location>
</feature>
<feature type="transmembrane region" description="Helical" evidence="1">
    <location>
        <begin position="183"/>
        <end position="203"/>
    </location>
</feature>
<feature type="transmembrane region" description="Helical" evidence="1">
    <location>
        <begin position="206"/>
        <end position="226"/>
    </location>
</feature>
<feature type="transmembrane region" description="Helical" evidence="1">
    <location>
        <begin position="262"/>
        <end position="282"/>
    </location>
</feature>
<feature type="transmembrane region" description="Helical" evidence="1">
    <location>
        <begin position="303"/>
        <end position="323"/>
    </location>
</feature>
<feature type="transmembrane region" description="Helical" evidence="1">
    <location>
        <begin position="355"/>
        <end position="375"/>
    </location>
</feature>
<feature type="transmembrane region" description="Helical" evidence="1">
    <location>
        <begin position="404"/>
        <end position="424"/>
    </location>
</feature>
<feature type="transmembrane region" description="Helical" evidence="1">
    <location>
        <begin position="428"/>
        <end position="448"/>
    </location>
</feature>
<feature type="transmembrane region" description="Helical" evidence="1">
    <location>
        <begin position="464"/>
        <end position="484"/>
    </location>
</feature>
<feature type="transmembrane region" description="Helical" evidence="1">
    <location>
        <begin position="493"/>
        <end position="513"/>
    </location>
</feature>
<accession>B1XCV3</accession>
<reference key="1">
    <citation type="journal article" date="2008" name="J. Bacteriol.">
        <title>The complete genome sequence of Escherichia coli DH10B: insights into the biology of a laboratory workhorse.</title>
        <authorList>
            <person name="Durfee T."/>
            <person name="Nelson R."/>
            <person name="Baldwin S."/>
            <person name="Plunkett G. III"/>
            <person name="Burland V."/>
            <person name="Mau B."/>
            <person name="Petrosino J.F."/>
            <person name="Qin X."/>
            <person name="Muzny D.M."/>
            <person name="Ayele M."/>
            <person name="Gibbs R.A."/>
            <person name="Csorgo B."/>
            <person name="Posfai G."/>
            <person name="Weinstock G.M."/>
            <person name="Blattner F.R."/>
        </authorList>
    </citation>
    <scope>NUCLEOTIDE SEQUENCE [LARGE SCALE GENOMIC DNA]</scope>
    <source>
        <strain>K12 / DH10B</strain>
    </source>
</reference>
<gene>
    <name evidence="1" type="primary">actP</name>
    <name type="ordered locus">ECDH10B_4257</name>
</gene>
<evidence type="ECO:0000255" key="1">
    <source>
        <dbReference type="HAMAP-Rule" id="MF_01426"/>
    </source>
</evidence>
<keyword id="KW-0997">Cell inner membrane</keyword>
<keyword id="KW-1003">Cell membrane</keyword>
<keyword id="KW-0406">Ion transport</keyword>
<keyword id="KW-0472">Membrane</keyword>
<keyword id="KW-0915">Sodium</keyword>
<keyword id="KW-0739">Sodium transport</keyword>
<keyword id="KW-0769">Symport</keyword>
<keyword id="KW-0812">Transmembrane</keyword>
<keyword id="KW-1133">Transmembrane helix</keyword>
<keyword id="KW-0813">Transport</keyword>
<name>ACTP_ECODH</name>
<organism>
    <name type="scientific">Escherichia coli (strain K12 / DH10B)</name>
    <dbReference type="NCBI Taxonomy" id="316385"/>
    <lineage>
        <taxon>Bacteria</taxon>
        <taxon>Pseudomonadati</taxon>
        <taxon>Pseudomonadota</taxon>
        <taxon>Gammaproteobacteria</taxon>
        <taxon>Enterobacterales</taxon>
        <taxon>Enterobacteriaceae</taxon>
        <taxon>Escherichia</taxon>
    </lineage>
</organism>